<evidence type="ECO:0000255" key="1"/>
<evidence type="ECO:0000255" key="2">
    <source>
        <dbReference type="PROSITE-ProRule" id="PRU00175"/>
    </source>
</evidence>
<evidence type="ECO:0000256" key="3">
    <source>
        <dbReference type="SAM" id="MobiDB-lite"/>
    </source>
</evidence>
<evidence type="ECO:0000305" key="4"/>
<keyword id="KW-0472">Membrane</keyword>
<keyword id="KW-0479">Metal-binding</keyword>
<keyword id="KW-1185">Reference proteome</keyword>
<keyword id="KW-0812">Transmembrane</keyword>
<keyword id="KW-1133">Transmembrane helix</keyword>
<keyword id="KW-0862">Zinc</keyword>
<keyword id="KW-0863">Zinc-finger</keyword>
<gene>
    <name type="primary">zfpl1</name>
    <name type="ORF">DDB_G0276489</name>
</gene>
<protein>
    <recommendedName>
        <fullName>Zinc finger protein-like 1 homolog</fullName>
    </recommendedName>
</protein>
<dbReference type="EMBL" id="AAFI02000015">
    <property type="protein sequence ID" value="EAL69198.1"/>
    <property type="molecule type" value="Genomic_DNA"/>
</dbReference>
<dbReference type="RefSeq" id="XP_643106.1">
    <property type="nucleotide sequence ID" value="XM_638014.1"/>
</dbReference>
<dbReference type="FunCoup" id="Q551M4">
    <property type="interactions" value="35"/>
</dbReference>
<dbReference type="STRING" id="44689.Q551M4"/>
<dbReference type="PaxDb" id="44689-DDB0203841"/>
<dbReference type="EnsemblProtists" id="EAL69198">
    <property type="protein sequence ID" value="EAL69198"/>
    <property type="gene ID" value="DDB_G0276489"/>
</dbReference>
<dbReference type="GeneID" id="8620510"/>
<dbReference type="KEGG" id="ddi:DDB_G0276489"/>
<dbReference type="dictyBase" id="DDB_G0276489"/>
<dbReference type="VEuPathDB" id="AmoebaDB:DDB_G0276489"/>
<dbReference type="eggNOG" id="KOG3970">
    <property type="taxonomic scope" value="Eukaryota"/>
</dbReference>
<dbReference type="HOGENOM" id="CLU_783962_0_0_1"/>
<dbReference type="InParanoid" id="Q551M4"/>
<dbReference type="OMA" id="CKCKKRS"/>
<dbReference type="PRO" id="PR:Q551M4"/>
<dbReference type="Proteomes" id="UP000002195">
    <property type="component" value="Chromosome 2"/>
</dbReference>
<dbReference type="GO" id="GO:0005794">
    <property type="term" value="C:Golgi apparatus"/>
    <property type="evidence" value="ECO:0000318"/>
    <property type="project" value="GO_Central"/>
</dbReference>
<dbReference type="GO" id="GO:0016020">
    <property type="term" value="C:membrane"/>
    <property type="evidence" value="ECO:0007669"/>
    <property type="project" value="UniProtKB-SubCell"/>
</dbReference>
<dbReference type="GO" id="GO:0008270">
    <property type="term" value="F:zinc ion binding"/>
    <property type="evidence" value="ECO:0007669"/>
    <property type="project" value="UniProtKB-KW"/>
</dbReference>
<dbReference type="CDD" id="cd16487">
    <property type="entry name" value="mRING-H2-C3DHC3_ZFPL1"/>
    <property type="match status" value="1"/>
</dbReference>
<dbReference type="Gene3D" id="3.30.40.10">
    <property type="entry name" value="Zinc/RING finger domain, C3HC4 (zinc finger)"/>
    <property type="match status" value="1"/>
</dbReference>
<dbReference type="InterPro" id="IPR039043">
    <property type="entry name" value="ZFPL1"/>
</dbReference>
<dbReference type="InterPro" id="IPR001841">
    <property type="entry name" value="Znf_RING"/>
</dbReference>
<dbReference type="InterPro" id="IPR013083">
    <property type="entry name" value="Znf_RING/FYVE/PHD"/>
</dbReference>
<dbReference type="PANTHER" id="PTHR12981">
    <property type="entry name" value="ZINC FINGER PROTEIN-LIKE 1"/>
    <property type="match status" value="1"/>
</dbReference>
<dbReference type="PANTHER" id="PTHR12981:SF0">
    <property type="entry name" value="ZINC FINGER PROTEIN-LIKE 1"/>
    <property type="match status" value="1"/>
</dbReference>
<dbReference type="SMART" id="SM00184">
    <property type="entry name" value="RING"/>
    <property type="match status" value="1"/>
</dbReference>
<dbReference type="SUPFAM" id="SSF57850">
    <property type="entry name" value="RING/U-box"/>
    <property type="match status" value="1"/>
</dbReference>
<dbReference type="PROSITE" id="PS50089">
    <property type="entry name" value="ZF_RING_2"/>
    <property type="match status" value="1"/>
</dbReference>
<feature type="chain" id="PRO_0000342148" description="Zinc finger protein-like 1 homolog">
    <location>
        <begin position="1"/>
        <end position="354"/>
    </location>
</feature>
<feature type="transmembrane region" description="Helical" evidence="1">
    <location>
        <begin position="287"/>
        <end position="307"/>
    </location>
</feature>
<feature type="zinc finger region" description="B box-type; degenerate">
    <location>
        <begin position="1"/>
        <end position="41"/>
    </location>
</feature>
<feature type="zinc finger region" description="RING-type; atypical" evidence="2">
    <location>
        <begin position="52"/>
        <end position="103"/>
    </location>
</feature>
<feature type="region of interest" description="Disordered" evidence="3">
    <location>
        <begin position="139"/>
        <end position="167"/>
    </location>
</feature>
<feature type="region of interest" description="Disordered" evidence="3">
    <location>
        <begin position="187"/>
        <end position="225"/>
    </location>
</feature>
<feature type="region of interest" description="Disordered" evidence="3">
    <location>
        <begin position="326"/>
        <end position="354"/>
    </location>
</feature>
<feature type="compositionally biased region" description="Low complexity" evidence="3">
    <location>
        <begin position="196"/>
        <end position="205"/>
    </location>
</feature>
<accession>Q551M4</accession>
<sequence>MGICKCKKRSEDFCFNHKKFICDSCVVADHSICYIKSYVSWLTDCEFEDSVCGVCKGKFDVDDNDDSVRLLCYHLYHPECIDVYVAALPQNSSVESYPCPKCPEPILPSNDKQSLLANSIRDRFSVSSWAGDYLKSFKKQNSNSNNNNNDNNNPKSNGITNGINGTHINNATSPEFYTNLDSIKSNGIHHHHHHSNNSNNNNIINPSLLEETPPLSHLNSNPYGLASRKHEHEDTVIQLNSGTNSNISNNIHGNNKIYDDDYDKYNKRPVNPISKIINNIKETKPKYLIMITVAIIVFLILISKMGSNSDSNDNIVGDNNNNNNNININNDNNGGNGAINEETLNDQKIPNNGQ</sequence>
<comment type="subcellular location">
    <subcellularLocation>
        <location evidence="4">Membrane</location>
        <topology evidence="4">Single-pass membrane protein</topology>
    </subcellularLocation>
</comment>
<comment type="similarity">
    <text evidence="4">Belongs to the ZFPL1 family.</text>
</comment>
<reference key="1">
    <citation type="journal article" date="2002" name="Nature">
        <title>Sequence and analysis of chromosome 2 of Dictyostelium discoideum.</title>
        <authorList>
            <person name="Gloeckner G."/>
            <person name="Eichinger L."/>
            <person name="Szafranski K."/>
            <person name="Pachebat J.A."/>
            <person name="Bankier A.T."/>
            <person name="Dear P.H."/>
            <person name="Lehmann R."/>
            <person name="Baumgart C."/>
            <person name="Parra G."/>
            <person name="Abril J.F."/>
            <person name="Guigo R."/>
            <person name="Kumpf K."/>
            <person name="Tunggal B."/>
            <person name="Cox E.C."/>
            <person name="Quail M.A."/>
            <person name="Platzer M."/>
            <person name="Rosenthal A."/>
            <person name="Noegel A.A."/>
        </authorList>
    </citation>
    <scope>NUCLEOTIDE SEQUENCE [LARGE SCALE GENOMIC DNA]</scope>
    <source>
        <strain>AX4</strain>
    </source>
</reference>
<reference key="2">
    <citation type="journal article" date="2005" name="Nature">
        <title>The genome of the social amoeba Dictyostelium discoideum.</title>
        <authorList>
            <person name="Eichinger L."/>
            <person name="Pachebat J.A."/>
            <person name="Gloeckner G."/>
            <person name="Rajandream M.A."/>
            <person name="Sucgang R."/>
            <person name="Berriman M."/>
            <person name="Song J."/>
            <person name="Olsen R."/>
            <person name="Szafranski K."/>
            <person name="Xu Q."/>
            <person name="Tunggal B."/>
            <person name="Kummerfeld S."/>
            <person name="Madera M."/>
            <person name="Konfortov B.A."/>
            <person name="Rivero F."/>
            <person name="Bankier A.T."/>
            <person name="Lehmann R."/>
            <person name="Hamlin N."/>
            <person name="Davies R."/>
            <person name="Gaudet P."/>
            <person name="Fey P."/>
            <person name="Pilcher K."/>
            <person name="Chen G."/>
            <person name="Saunders D."/>
            <person name="Sodergren E.J."/>
            <person name="Davis P."/>
            <person name="Kerhornou A."/>
            <person name="Nie X."/>
            <person name="Hall N."/>
            <person name="Anjard C."/>
            <person name="Hemphill L."/>
            <person name="Bason N."/>
            <person name="Farbrother P."/>
            <person name="Desany B."/>
            <person name="Just E."/>
            <person name="Morio T."/>
            <person name="Rost R."/>
            <person name="Churcher C.M."/>
            <person name="Cooper J."/>
            <person name="Haydock S."/>
            <person name="van Driessche N."/>
            <person name="Cronin A."/>
            <person name="Goodhead I."/>
            <person name="Muzny D.M."/>
            <person name="Mourier T."/>
            <person name="Pain A."/>
            <person name="Lu M."/>
            <person name="Harper D."/>
            <person name="Lindsay R."/>
            <person name="Hauser H."/>
            <person name="James K.D."/>
            <person name="Quiles M."/>
            <person name="Madan Babu M."/>
            <person name="Saito T."/>
            <person name="Buchrieser C."/>
            <person name="Wardroper A."/>
            <person name="Felder M."/>
            <person name="Thangavelu M."/>
            <person name="Johnson D."/>
            <person name="Knights A."/>
            <person name="Loulseged H."/>
            <person name="Mungall K.L."/>
            <person name="Oliver K."/>
            <person name="Price C."/>
            <person name="Quail M.A."/>
            <person name="Urushihara H."/>
            <person name="Hernandez J."/>
            <person name="Rabbinowitsch E."/>
            <person name="Steffen D."/>
            <person name="Sanders M."/>
            <person name="Ma J."/>
            <person name="Kohara Y."/>
            <person name="Sharp S."/>
            <person name="Simmonds M.N."/>
            <person name="Spiegler S."/>
            <person name="Tivey A."/>
            <person name="Sugano S."/>
            <person name="White B."/>
            <person name="Walker D."/>
            <person name="Woodward J.R."/>
            <person name="Winckler T."/>
            <person name="Tanaka Y."/>
            <person name="Shaulsky G."/>
            <person name="Schleicher M."/>
            <person name="Weinstock G.M."/>
            <person name="Rosenthal A."/>
            <person name="Cox E.C."/>
            <person name="Chisholm R.L."/>
            <person name="Gibbs R.A."/>
            <person name="Loomis W.F."/>
            <person name="Platzer M."/>
            <person name="Kay R.R."/>
            <person name="Williams J.G."/>
            <person name="Dear P.H."/>
            <person name="Noegel A.A."/>
            <person name="Barrell B.G."/>
            <person name="Kuspa A."/>
        </authorList>
    </citation>
    <scope>NUCLEOTIDE SEQUENCE [LARGE SCALE GENOMIC DNA]</scope>
    <source>
        <strain>AX4</strain>
    </source>
</reference>
<organism>
    <name type="scientific">Dictyostelium discoideum</name>
    <name type="common">Social amoeba</name>
    <dbReference type="NCBI Taxonomy" id="44689"/>
    <lineage>
        <taxon>Eukaryota</taxon>
        <taxon>Amoebozoa</taxon>
        <taxon>Evosea</taxon>
        <taxon>Eumycetozoa</taxon>
        <taxon>Dictyostelia</taxon>
        <taxon>Dictyosteliales</taxon>
        <taxon>Dictyosteliaceae</taxon>
        <taxon>Dictyostelium</taxon>
    </lineage>
</organism>
<proteinExistence type="inferred from homology"/>
<name>ZFPL1_DICDI</name>